<comment type="function">
    <text evidence="1">Protein and nucleotide deglycase that catalyzes the deglycation of the Maillard adducts formed between amino groups of proteins or nucleotides and reactive carbonyl groups of glyoxals. Thus, functions as a protein deglycase that repairs methylglyoxal- and glyoxal-glycated proteins, and releases repaired proteins and lactate or glycolate, respectively. Deglycates cysteine, arginine and lysine residues in proteins, and thus reactivates these proteins by reversing glycation by glyoxals. Acts on early glycation intermediates (hemithioacetals and aminocarbinols), preventing the formation of Schiff bases and advanced glycation endproducts (AGE). Also functions as a nucleotide deglycase able to repair glycated guanine in the free nucleotide pool (GTP, GDP, GMP, dGTP) and in DNA and RNA. Is thus involved in a major nucleotide repair system named guanine glycation repair (GG repair), dedicated to reversing methylglyoxal and glyoxal damage via nucleotide sanitization and direct nucleic acid repair. Plays an important role in protecting cells from carbonyl stress.</text>
</comment>
<comment type="catalytic activity">
    <reaction evidence="1">
        <text>N(omega)-(1-hydroxy-2-oxopropyl)-L-arginyl-[protein] + H2O = lactate + L-arginyl-[protein] + H(+)</text>
        <dbReference type="Rhea" id="RHEA:49548"/>
        <dbReference type="Rhea" id="RHEA-COMP:10532"/>
        <dbReference type="Rhea" id="RHEA-COMP:12428"/>
        <dbReference type="ChEBI" id="CHEBI:15377"/>
        <dbReference type="ChEBI" id="CHEBI:15378"/>
        <dbReference type="ChEBI" id="CHEBI:24996"/>
        <dbReference type="ChEBI" id="CHEBI:29965"/>
        <dbReference type="ChEBI" id="CHEBI:131708"/>
        <dbReference type="EC" id="3.5.1.124"/>
    </reaction>
</comment>
<comment type="catalytic activity">
    <reaction evidence="1">
        <text>N(6)-(1-hydroxy-2-oxopropyl)-L-lysyl-[protein] + H2O = lactate + L-lysyl-[protein] + H(+)</text>
        <dbReference type="Rhea" id="RHEA:49552"/>
        <dbReference type="Rhea" id="RHEA-COMP:9752"/>
        <dbReference type="Rhea" id="RHEA-COMP:12429"/>
        <dbReference type="ChEBI" id="CHEBI:15377"/>
        <dbReference type="ChEBI" id="CHEBI:15378"/>
        <dbReference type="ChEBI" id="CHEBI:24996"/>
        <dbReference type="ChEBI" id="CHEBI:29969"/>
        <dbReference type="ChEBI" id="CHEBI:131709"/>
        <dbReference type="EC" id="3.5.1.124"/>
    </reaction>
</comment>
<comment type="catalytic activity">
    <reaction evidence="1">
        <text>S-(1-hydroxy-2-oxopropyl)-L-cysteinyl-[protein] + H2O = lactate + L-cysteinyl-[protein] + H(+)</text>
        <dbReference type="Rhea" id="RHEA:49556"/>
        <dbReference type="Rhea" id="RHEA-COMP:10131"/>
        <dbReference type="Rhea" id="RHEA-COMP:12430"/>
        <dbReference type="ChEBI" id="CHEBI:15377"/>
        <dbReference type="ChEBI" id="CHEBI:15378"/>
        <dbReference type="ChEBI" id="CHEBI:24996"/>
        <dbReference type="ChEBI" id="CHEBI:29950"/>
        <dbReference type="ChEBI" id="CHEBI:131710"/>
        <dbReference type="EC" id="3.5.1.124"/>
    </reaction>
</comment>
<comment type="catalytic activity">
    <reaction evidence="1">
        <text>N(omega)-(1-hydroxy-2-oxoethyl)-L-arginyl-[protein] + H2O = L-arginyl-[protein] + glycolate + H(+)</text>
        <dbReference type="Rhea" id="RHEA:57188"/>
        <dbReference type="Rhea" id="RHEA-COMP:10532"/>
        <dbReference type="Rhea" id="RHEA-COMP:14844"/>
        <dbReference type="ChEBI" id="CHEBI:15377"/>
        <dbReference type="ChEBI" id="CHEBI:15378"/>
        <dbReference type="ChEBI" id="CHEBI:29805"/>
        <dbReference type="ChEBI" id="CHEBI:29965"/>
        <dbReference type="ChEBI" id="CHEBI:141553"/>
        <dbReference type="EC" id="3.5.1.124"/>
    </reaction>
</comment>
<comment type="catalytic activity">
    <reaction evidence="1">
        <text>N(6)-(1-hydroxy-2-oxoethyl)-L-lysyl-[protein] + H2O = glycolate + L-lysyl-[protein] + H(+)</text>
        <dbReference type="Rhea" id="RHEA:57192"/>
        <dbReference type="Rhea" id="RHEA-COMP:9752"/>
        <dbReference type="Rhea" id="RHEA-COMP:14845"/>
        <dbReference type="ChEBI" id="CHEBI:15377"/>
        <dbReference type="ChEBI" id="CHEBI:15378"/>
        <dbReference type="ChEBI" id="CHEBI:29805"/>
        <dbReference type="ChEBI" id="CHEBI:29969"/>
        <dbReference type="ChEBI" id="CHEBI:141554"/>
        <dbReference type="EC" id="3.5.1.124"/>
    </reaction>
</comment>
<comment type="catalytic activity">
    <reaction evidence="1">
        <text>S-(1-hydroxy-2-oxoethyl)-L-cysteinyl-[protein] + H2O = glycolate + L-cysteinyl-[protein] + H(+)</text>
        <dbReference type="Rhea" id="RHEA:57196"/>
        <dbReference type="Rhea" id="RHEA-COMP:10131"/>
        <dbReference type="Rhea" id="RHEA-COMP:14846"/>
        <dbReference type="ChEBI" id="CHEBI:15377"/>
        <dbReference type="ChEBI" id="CHEBI:15378"/>
        <dbReference type="ChEBI" id="CHEBI:29805"/>
        <dbReference type="ChEBI" id="CHEBI:29950"/>
        <dbReference type="ChEBI" id="CHEBI:141555"/>
        <dbReference type="EC" id="3.5.1.124"/>
    </reaction>
</comment>
<comment type="catalytic activity">
    <reaction evidence="1">
        <text>N(2)-(1-hydroxy-2-oxopropyl)-dGTP + H2O = lactate + dGTP + H(+)</text>
        <dbReference type="Rhea" id="RHEA:57244"/>
        <dbReference type="ChEBI" id="CHEBI:15377"/>
        <dbReference type="ChEBI" id="CHEBI:15378"/>
        <dbReference type="ChEBI" id="CHEBI:24996"/>
        <dbReference type="ChEBI" id="CHEBI:61429"/>
        <dbReference type="ChEBI" id="CHEBI:141569"/>
    </reaction>
</comment>
<comment type="catalytic activity">
    <reaction evidence="1">
        <text>N(2)-(1-hydroxy-2-oxopropyl)-GTP + H2O = lactate + GTP + H(+)</text>
        <dbReference type="Rhea" id="RHEA:57256"/>
        <dbReference type="ChEBI" id="CHEBI:15377"/>
        <dbReference type="ChEBI" id="CHEBI:15378"/>
        <dbReference type="ChEBI" id="CHEBI:24996"/>
        <dbReference type="ChEBI" id="CHEBI:37565"/>
        <dbReference type="ChEBI" id="CHEBI:141570"/>
    </reaction>
</comment>
<comment type="catalytic activity">
    <reaction evidence="1">
        <text>N(2)-(1-hydroxy-2-oxopropyl)-GDP + H2O = lactate + GDP + H(+)</text>
        <dbReference type="Rhea" id="RHEA:57260"/>
        <dbReference type="ChEBI" id="CHEBI:15377"/>
        <dbReference type="ChEBI" id="CHEBI:15378"/>
        <dbReference type="ChEBI" id="CHEBI:24996"/>
        <dbReference type="ChEBI" id="CHEBI:58189"/>
        <dbReference type="ChEBI" id="CHEBI:141573"/>
    </reaction>
</comment>
<comment type="catalytic activity">
    <reaction evidence="1">
        <text>N(2)-(1-hydroxy-2-oxopropyl)-GMP + H2O = lactate + GMP + H(+)</text>
        <dbReference type="Rhea" id="RHEA:57268"/>
        <dbReference type="ChEBI" id="CHEBI:15377"/>
        <dbReference type="ChEBI" id="CHEBI:15378"/>
        <dbReference type="ChEBI" id="CHEBI:24996"/>
        <dbReference type="ChEBI" id="CHEBI:58115"/>
        <dbReference type="ChEBI" id="CHEBI:141575"/>
    </reaction>
</comment>
<comment type="catalytic activity">
    <reaction evidence="1">
        <text>N(2)-(1-hydroxy-2-oxoethyl)-dGTP + H2O = dGTP + glycolate + H(+)</text>
        <dbReference type="Rhea" id="RHEA:57248"/>
        <dbReference type="ChEBI" id="CHEBI:15377"/>
        <dbReference type="ChEBI" id="CHEBI:15378"/>
        <dbReference type="ChEBI" id="CHEBI:29805"/>
        <dbReference type="ChEBI" id="CHEBI:61429"/>
        <dbReference type="ChEBI" id="CHEBI:141572"/>
    </reaction>
</comment>
<comment type="catalytic activity">
    <reaction evidence="1">
        <text>N(2)-(1-hydroxy-2-oxoethyl)-GTP + H2O = glycolate + GTP + H(+)</text>
        <dbReference type="Rhea" id="RHEA:57252"/>
        <dbReference type="ChEBI" id="CHEBI:15377"/>
        <dbReference type="ChEBI" id="CHEBI:15378"/>
        <dbReference type="ChEBI" id="CHEBI:29805"/>
        <dbReference type="ChEBI" id="CHEBI:37565"/>
        <dbReference type="ChEBI" id="CHEBI:141571"/>
    </reaction>
</comment>
<comment type="catalytic activity">
    <reaction evidence="1">
        <text>N(2)-(1-hydroxy-2-oxoethyl)-GDP + H2O = glycolate + GDP + H(+)</text>
        <dbReference type="Rhea" id="RHEA:57264"/>
        <dbReference type="ChEBI" id="CHEBI:15377"/>
        <dbReference type="ChEBI" id="CHEBI:15378"/>
        <dbReference type="ChEBI" id="CHEBI:29805"/>
        <dbReference type="ChEBI" id="CHEBI:58189"/>
        <dbReference type="ChEBI" id="CHEBI:141574"/>
    </reaction>
</comment>
<comment type="catalytic activity">
    <reaction evidence="1">
        <text>N(2)-(1-hydroxy-2-oxoethyl)-GMP + H2O = glycolate + GMP + H(+)</text>
        <dbReference type="Rhea" id="RHEA:57304"/>
        <dbReference type="ChEBI" id="CHEBI:15377"/>
        <dbReference type="ChEBI" id="CHEBI:15378"/>
        <dbReference type="ChEBI" id="CHEBI:29805"/>
        <dbReference type="ChEBI" id="CHEBI:58115"/>
        <dbReference type="ChEBI" id="CHEBI:141576"/>
    </reaction>
</comment>
<comment type="catalytic activity">
    <reaction evidence="1">
        <text>an N(2)-(1-hydroxy-2-oxopropyl)-guanosine in RNA + H2O = a guanosine in RNA + lactate + H(+)</text>
        <dbReference type="Rhea" id="RHEA:57288"/>
        <dbReference type="Rhea" id="RHEA-COMP:14855"/>
        <dbReference type="Rhea" id="RHEA-COMP:14858"/>
        <dbReference type="ChEBI" id="CHEBI:15377"/>
        <dbReference type="ChEBI" id="CHEBI:15378"/>
        <dbReference type="ChEBI" id="CHEBI:24996"/>
        <dbReference type="ChEBI" id="CHEBI:74269"/>
        <dbReference type="ChEBI" id="CHEBI:141580"/>
    </reaction>
</comment>
<comment type="catalytic activity">
    <reaction evidence="1">
        <text>an N(2)-(1-hydroxy-2-oxopropyl)-2'-deoxyguanosine in DNA + H2O = a 2'-deoxyguanosine in DNA + lactate + H(+)</text>
        <dbReference type="Rhea" id="RHEA:57300"/>
        <dbReference type="Rhea" id="RHEA-COMP:11367"/>
        <dbReference type="Rhea" id="RHEA-COMP:14856"/>
        <dbReference type="ChEBI" id="CHEBI:15377"/>
        <dbReference type="ChEBI" id="CHEBI:15378"/>
        <dbReference type="ChEBI" id="CHEBI:24996"/>
        <dbReference type="ChEBI" id="CHEBI:85445"/>
        <dbReference type="ChEBI" id="CHEBI:141578"/>
    </reaction>
</comment>
<comment type="catalytic activity">
    <reaction evidence="1">
        <text>an N(2)-(1-hydroxy-2-oxoethyl)-guanosine in RNA + H2O = a guanosine in RNA + glycolate + H(+)</text>
        <dbReference type="Rhea" id="RHEA:57292"/>
        <dbReference type="Rhea" id="RHEA-COMP:14855"/>
        <dbReference type="Rhea" id="RHEA-COMP:14859"/>
        <dbReference type="ChEBI" id="CHEBI:15377"/>
        <dbReference type="ChEBI" id="CHEBI:15378"/>
        <dbReference type="ChEBI" id="CHEBI:29805"/>
        <dbReference type="ChEBI" id="CHEBI:74269"/>
        <dbReference type="ChEBI" id="CHEBI:141581"/>
    </reaction>
</comment>
<comment type="catalytic activity">
    <reaction evidence="1">
        <text>an N(2)-(1-hydroxy-2-oxoethyl)-2'-deoxyguanosine in DNA + H2O = a 2'-deoxyguanosine in DNA + glycolate + H(+)</text>
        <dbReference type="Rhea" id="RHEA:57296"/>
        <dbReference type="Rhea" id="RHEA-COMP:11367"/>
        <dbReference type="Rhea" id="RHEA-COMP:14857"/>
        <dbReference type="ChEBI" id="CHEBI:15377"/>
        <dbReference type="ChEBI" id="CHEBI:15378"/>
        <dbReference type="ChEBI" id="CHEBI:29805"/>
        <dbReference type="ChEBI" id="CHEBI:85445"/>
        <dbReference type="ChEBI" id="CHEBI:141579"/>
    </reaction>
</comment>
<comment type="subcellular location">
    <subcellularLocation>
        <location evidence="1">Cytoplasm</location>
    </subcellularLocation>
</comment>
<comment type="similarity">
    <text evidence="1">Belongs to the peptidase C56 family. HchA subfamily.</text>
</comment>
<reference key="1">
    <citation type="journal article" date="2005" name="J. Bacteriol.">
        <title>Insights on evolution of virulence and resistance from the complete genome analysis of an early methicillin-resistant Staphylococcus aureus strain and a biofilm-producing methicillin-resistant Staphylococcus epidermidis strain.</title>
        <authorList>
            <person name="Gill S.R."/>
            <person name="Fouts D.E."/>
            <person name="Archer G.L."/>
            <person name="Mongodin E.F."/>
            <person name="DeBoy R.T."/>
            <person name="Ravel J."/>
            <person name="Paulsen I.T."/>
            <person name="Kolonay J.F."/>
            <person name="Brinkac L.M."/>
            <person name="Beanan M.J."/>
            <person name="Dodson R.J."/>
            <person name="Daugherty S.C."/>
            <person name="Madupu R."/>
            <person name="Angiuoli S.V."/>
            <person name="Durkin A.S."/>
            <person name="Haft D.H."/>
            <person name="Vamathevan J.J."/>
            <person name="Khouri H."/>
            <person name="Utterback T.R."/>
            <person name="Lee C."/>
            <person name="Dimitrov G."/>
            <person name="Jiang L."/>
            <person name="Qin H."/>
            <person name="Weidman J."/>
            <person name="Tran K."/>
            <person name="Kang K.H."/>
            <person name="Hance I.R."/>
            <person name="Nelson K.E."/>
            <person name="Fraser C.M."/>
        </authorList>
    </citation>
    <scope>NUCLEOTIDE SEQUENCE [LARGE SCALE GENOMIC DNA]</scope>
    <source>
        <strain>COL</strain>
    </source>
</reference>
<sequence>MSQDVNELSKQPTPDKAEDNAFFPSPYSLSQYTAPKTDFDGVEHKGAYKDGKWKVLMIAAEERYVLLENGKMFSTGNHPVEMLLPLHHLMEAGFDVDVATLSGYPVKLELWAMPTEDEAVISTYNKLKEKLKQPKKLADVIKNELGPDSDYLSVFIPGGHAAVVGISESEDVQQTLDWALDNDRFIVTLCHGPAALLSAGLNREKSPLEGYSVCVFPDSLDEGANIEIGYLPGRLKWLVADLLTKQGLKVVNDDMTGRTLKDRKLLTGDSPLASNELGKLAVNEMLNAIQNK</sequence>
<evidence type="ECO:0000255" key="1">
    <source>
        <dbReference type="HAMAP-Rule" id="MF_01046"/>
    </source>
</evidence>
<evidence type="ECO:0000256" key="2">
    <source>
        <dbReference type="SAM" id="MobiDB-lite"/>
    </source>
</evidence>
<feature type="chain" id="PRO_0000209417" description="Protein/nucleic acid deglycase HchA">
    <location>
        <begin position="1"/>
        <end position="292"/>
    </location>
</feature>
<feature type="region of interest" description="Disordered" evidence="2">
    <location>
        <begin position="1"/>
        <end position="23"/>
    </location>
</feature>
<feature type="compositionally biased region" description="Polar residues" evidence="2">
    <location>
        <begin position="1"/>
        <end position="12"/>
    </location>
</feature>
<feature type="active site" description="Nucleophile" evidence="1">
    <location>
        <position position="190"/>
    </location>
</feature>
<keyword id="KW-0963">Cytoplasm</keyword>
<keyword id="KW-0227">DNA damage</keyword>
<keyword id="KW-0234">DNA repair</keyword>
<keyword id="KW-0378">Hydrolase</keyword>
<keyword id="KW-0346">Stress response</keyword>
<name>HCHA_STAAC</name>
<gene>
    <name evidence="1" type="primary">hchA</name>
    <name type="ordered locus">SACOL0597</name>
</gene>
<proteinExistence type="inferred from homology"/>
<dbReference type="EC" id="3.1.2.-" evidence="1"/>
<dbReference type="EC" id="3.5.1.-" evidence="1"/>
<dbReference type="EC" id="3.5.1.124" evidence="1"/>
<dbReference type="EMBL" id="CP000046">
    <property type="protein sequence ID" value="AAW37707.1"/>
    <property type="molecule type" value="Genomic_DNA"/>
</dbReference>
<dbReference type="RefSeq" id="WP_000076404.1">
    <property type="nucleotide sequence ID" value="NZ_JBGOFO010000009.1"/>
</dbReference>
<dbReference type="SMR" id="Q5HIC4"/>
<dbReference type="KEGG" id="sac:SACOL0597"/>
<dbReference type="HOGENOM" id="CLU_066933_0_0_9"/>
<dbReference type="Proteomes" id="UP000000530">
    <property type="component" value="Chromosome"/>
</dbReference>
<dbReference type="GO" id="GO:0005737">
    <property type="term" value="C:cytoplasm"/>
    <property type="evidence" value="ECO:0007669"/>
    <property type="project" value="UniProtKB-SubCell"/>
</dbReference>
<dbReference type="GO" id="GO:0019172">
    <property type="term" value="F:glyoxalase III activity"/>
    <property type="evidence" value="ECO:0007669"/>
    <property type="project" value="TreeGrafter"/>
</dbReference>
<dbReference type="GO" id="GO:0036524">
    <property type="term" value="F:protein deglycase activity"/>
    <property type="evidence" value="ECO:0007669"/>
    <property type="project" value="UniProtKB-UniRule"/>
</dbReference>
<dbReference type="GO" id="GO:0016790">
    <property type="term" value="F:thiolester hydrolase activity"/>
    <property type="evidence" value="ECO:0007669"/>
    <property type="project" value="UniProtKB-UniRule"/>
</dbReference>
<dbReference type="GO" id="GO:0006281">
    <property type="term" value="P:DNA repair"/>
    <property type="evidence" value="ECO:0007669"/>
    <property type="project" value="UniProtKB-UniRule"/>
</dbReference>
<dbReference type="GO" id="GO:0019243">
    <property type="term" value="P:methylglyoxal catabolic process to D-lactate via S-lactoyl-glutathione"/>
    <property type="evidence" value="ECO:0007669"/>
    <property type="project" value="TreeGrafter"/>
</dbReference>
<dbReference type="GO" id="GO:0030091">
    <property type="term" value="P:protein repair"/>
    <property type="evidence" value="ECO:0007669"/>
    <property type="project" value="UniProtKB-UniRule"/>
</dbReference>
<dbReference type="CDD" id="cd03148">
    <property type="entry name" value="GATase1_EcHsp31_like"/>
    <property type="match status" value="1"/>
</dbReference>
<dbReference type="Gene3D" id="3.40.50.880">
    <property type="match status" value="1"/>
</dbReference>
<dbReference type="HAMAP" id="MF_01046">
    <property type="entry name" value="Deglycase_HchA"/>
    <property type="match status" value="1"/>
</dbReference>
<dbReference type="InterPro" id="IPR029062">
    <property type="entry name" value="Class_I_gatase-like"/>
</dbReference>
<dbReference type="InterPro" id="IPR002818">
    <property type="entry name" value="DJ-1/PfpI"/>
</dbReference>
<dbReference type="InterPro" id="IPR017283">
    <property type="entry name" value="HchA"/>
</dbReference>
<dbReference type="InterPro" id="IPR050325">
    <property type="entry name" value="Prot/Nucl_acid_deglycase"/>
</dbReference>
<dbReference type="NCBIfam" id="NF003168">
    <property type="entry name" value="PRK04155.1"/>
    <property type="match status" value="1"/>
</dbReference>
<dbReference type="PANTHER" id="PTHR48094">
    <property type="entry name" value="PROTEIN/NUCLEIC ACID DEGLYCASE DJ-1-RELATED"/>
    <property type="match status" value="1"/>
</dbReference>
<dbReference type="PANTHER" id="PTHR48094:SF20">
    <property type="entry name" value="PROTEIN_NUCLEIC ACID DEGLYCASE 1"/>
    <property type="match status" value="1"/>
</dbReference>
<dbReference type="Pfam" id="PF01965">
    <property type="entry name" value="DJ-1_PfpI"/>
    <property type="match status" value="1"/>
</dbReference>
<dbReference type="PIRSF" id="PIRSF037798">
    <property type="entry name" value="Chaperone_HchA"/>
    <property type="match status" value="1"/>
</dbReference>
<dbReference type="SUPFAM" id="SSF52317">
    <property type="entry name" value="Class I glutamine amidotransferase-like"/>
    <property type="match status" value="1"/>
</dbReference>
<accession>Q5HIC4</accession>
<organism>
    <name type="scientific">Staphylococcus aureus (strain COL)</name>
    <dbReference type="NCBI Taxonomy" id="93062"/>
    <lineage>
        <taxon>Bacteria</taxon>
        <taxon>Bacillati</taxon>
        <taxon>Bacillota</taxon>
        <taxon>Bacilli</taxon>
        <taxon>Bacillales</taxon>
        <taxon>Staphylococcaceae</taxon>
        <taxon>Staphylococcus</taxon>
    </lineage>
</organism>
<protein>
    <recommendedName>
        <fullName evidence="1">Protein/nucleic acid deglycase HchA</fullName>
        <ecNumber evidence="1">3.1.2.-</ecNumber>
        <ecNumber evidence="1">3.5.1.-</ecNumber>
        <ecNumber evidence="1">3.5.1.124</ecNumber>
    </recommendedName>
    <alternativeName>
        <fullName evidence="1">Maillard deglycase</fullName>
    </alternativeName>
</protein>